<comment type="function">
    <text evidence="1">Binds together with bS18 to 16S ribosomal RNA.</text>
</comment>
<comment type="similarity">
    <text evidence="1">Belongs to the bacterial ribosomal protein bS6 family.</text>
</comment>
<feature type="chain" id="PRO_1000005367" description="Small ribosomal subunit protein bS6">
    <location>
        <begin position="1"/>
        <end position="96"/>
    </location>
</feature>
<organism>
    <name type="scientific">Streptococcus pyogenes serotype M5 (strain Manfredo)</name>
    <dbReference type="NCBI Taxonomy" id="160491"/>
    <lineage>
        <taxon>Bacteria</taxon>
        <taxon>Bacillati</taxon>
        <taxon>Bacillota</taxon>
        <taxon>Bacilli</taxon>
        <taxon>Lactobacillales</taxon>
        <taxon>Streptococcaceae</taxon>
        <taxon>Streptococcus</taxon>
    </lineage>
</organism>
<reference key="1">
    <citation type="journal article" date="2007" name="J. Bacteriol.">
        <title>Complete genome of acute rheumatic fever-associated serotype M5 Streptococcus pyogenes strain Manfredo.</title>
        <authorList>
            <person name="Holden M.T.G."/>
            <person name="Scott A."/>
            <person name="Cherevach I."/>
            <person name="Chillingworth T."/>
            <person name="Churcher C."/>
            <person name="Cronin A."/>
            <person name="Dowd L."/>
            <person name="Feltwell T."/>
            <person name="Hamlin N."/>
            <person name="Holroyd S."/>
            <person name="Jagels K."/>
            <person name="Moule S."/>
            <person name="Mungall K."/>
            <person name="Quail M.A."/>
            <person name="Price C."/>
            <person name="Rabbinowitsch E."/>
            <person name="Sharp S."/>
            <person name="Skelton J."/>
            <person name="Whitehead S."/>
            <person name="Barrell B.G."/>
            <person name="Kehoe M."/>
            <person name="Parkhill J."/>
        </authorList>
    </citation>
    <scope>NUCLEOTIDE SEQUENCE [LARGE SCALE GENOMIC DNA]</scope>
    <source>
        <strain>Manfredo</strain>
    </source>
</reference>
<protein>
    <recommendedName>
        <fullName evidence="1">Small ribosomal subunit protein bS6</fullName>
    </recommendedName>
    <alternativeName>
        <fullName evidence="2">30S ribosomal protein S6</fullName>
    </alternativeName>
</protein>
<name>RS6_STRPG</name>
<evidence type="ECO:0000255" key="1">
    <source>
        <dbReference type="HAMAP-Rule" id="MF_00360"/>
    </source>
</evidence>
<evidence type="ECO:0000305" key="2"/>
<sequence>MAKYEILYIIRPNIEEEAKNALVARFDSILTDNGATVVESKDWEKRRLAYEINDFREGLYHIVNLEATDAAALNEFDRLSKINGDILRHMIVKLDA</sequence>
<proteinExistence type="inferred from homology"/>
<keyword id="KW-0687">Ribonucleoprotein</keyword>
<keyword id="KW-0689">Ribosomal protein</keyword>
<keyword id="KW-0694">RNA-binding</keyword>
<keyword id="KW-0699">rRNA-binding</keyword>
<dbReference type="EMBL" id="AM295007">
    <property type="protein sequence ID" value="CAM29637.1"/>
    <property type="molecule type" value="Genomic_DNA"/>
</dbReference>
<dbReference type="RefSeq" id="WP_002983117.1">
    <property type="nucleotide sequence ID" value="NC_009332.1"/>
</dbReference>
<dbReference type="SMR" id="A2RCR4"/>
<dbReference type="GeneID" id="83689976"/>
<dbReference type="KEGG" id="spf:SpyM50295"/>
<dbReference type="HOGENOM" id="CLU_113441_5_3_9"/>
<dbReference type="GO" id="GO:0005737">
    <property type="term" value="C:cytoplasm"/>
    <property type="evidence" value="ECO:0007669"/>
    <property type="project" value="UniProtKB-ARBA"/>
</dbReference>
<dbReference type="GO" id="GO:1990904">
    <property type="term" value="C:ribonucleoprotein complex"/>
    <property type="evidence" value="ECO:0007669"/>
    <property type="project" value="UniProtKB-KW"/>
</dbReference>
<dbReference type="GO" id="GO:0005840">
    <property type="term" value="C:ribosome"/>
    <property type="evidence" value="ECO:0007669"/>
    <property type="project" value="UniProtKB-KW"/>
</dbReference>
<dbReference type="GO" id="GO:0070181">
    <property type="term" value="F:small ribosomal subunit rRNA binding"/>
    <property type="evidence" value="ECO:0007669"/>
    <property type="project" value="TreeGrafter"/>
</dbReference>
<dbReference type="GO" id="GO:0003735">
    <property type="term" value="F:structural constituent of ribosome"/>
    <property type="evidence" value="ECO:0007669"/>
    <property type="project" value="InterPro"/>
</dbReference>
<dbReference type="GO" id="GO:0006412">
    <property type="term" value="P:translation"/>
    <property type="evidence" value="ECO:0007669"/>
    <property type="project" value="UniProtKB-UniRule"/>
</dbReference>
<dbReference type="CDD" id="cd00473">
    <property type="entry name" value="bS6"/>
    <property type="match status" value="1"/>
</dbReference>
<dbReference type="FunFam" id="3.30.70.60:FF:000002">
    <property type="entry name" value="30S ribosomal protein S6"/>
    <property type="match status" value="1"/>
</dbReference>
<dbReference type="Gene3D" id="3.30.70.60">
    <property type="match status" value="1"/>
</dbReference>
<dbReference type="HAMAP" id="MF_00360">
    <property type="entry name" value="Ribosomal_bS6"/>
    <property type="match status" value="1"/>
</dbReference>
<dbReference type="InterPro" id="IPR000529">
    <property type="entry name" value="Ribosomal_bS6"/>
</dbReference>
<dbReference type="InterPro" id="IPR035980">
    <property type="entry name" value="Ribosomal_bS6_sf"/>
</dbReference>
<dbReference type="InterPro" id="IPR020814">
    <property type="entry name" value="Ribosomal_S6_plastid/chlpt"/>
</dbReference>
<dbReference type="InterPro" id="IPR014717">
    <property type="entry name" value="Transl_elong_EF1B/ribsomal_bS6"/>
</dbReference>
<dbReference type="NCBIfam" id="TIGR00166">
    <property type="entry name" value="S6"/>
    <property type="match status" value="1"/>
</dbReference>
<dbReference type="PANTHER" id="PTHR21011">
    <property type="entry name" value="MITOCHONDRIAL 28S RIBOSOMAL PROTEIN S6"/>
    <property type="match status" value="1"/>
</dbReference>
<dbReference type="PANTHER" id="PTHR21011:SF1">
    <property type="entry name" value="SMALL RIBOSOMAL SUBUNIT PROTEIN BS6M"/>
    <property type="match status" value="1"/>
</dbReference>
<dbReference type="Pfam" id="PF01250">
    <property type="entry name" value="Ribosomal_S6"/>
    <property type="match status" value="1"/>
</dbReference>
<dbReference type="SUPFAM" id="SSF54995">
    <property type="entry name" value="Ribosomal protein S6"/>
    <property type="match status" value="1"/>
</dbReference>
<gene>
    <name evidence="1" type="primary">rpsF</name>
    <name type="ordered locus">SpyM50295</name>
</gene>
<accession>A2RCR4</accession>